<keyword id="KW-0963">Cytoplasm</keyword>
<keyword id="KW-0274">FAD</keyword>
<keyword id="KW-0285">Flavoprotein</keyword>
<keyword id="KW-0520">NAD</keyword>
<keyword id="KW-1185">Reference proteome</keyword>
<keyword id="KW-0819">tRNA processing</keyword>
<proteinExistence type="inferred from homology"/>
<name>MNMG_BORA1</name>
<dbReference type="EMBL" id="AM167904">
    <property type="protein sequence ID" value="CAJ47585.1"/>
    <property type="molecule type" value="Genomic_DNA"/>
</dbReference>
<dbReference type="RefSeq" id="WP_012415712.1">
    <property type="nucleotide sequence ID" value="NC_010645.1"/>
</dbReference>
<dbReference type="SMR" id="Q2L2T3"/>
<dbReference type="STRING" id="360910.BAV0001"/>
<dbReference type="KEGG" id="bav:BAV0001"/>
<dbReference type="eggNOG" id="COG0445">
    <property type="taxonomic scope" value="Bacteria"/>
</dbReference>
<dbReference type="HOGENOM" id="CLU_007831_2_2_4"/>
<dbReference type="OrthoDB" id="9815560at2"/>
<dbReference type="Proteomes" id="UP000001977">
    <property type="component" value="Chromosome"/>
</dbReference>
<dbReference type="GO" id="GO:0005829">
    <property type="term" value="C:cytosol"/>
    <property type="evidence" value="ECO:0007669"/>
    <property type="project" value="TreeGrafter"/>
</dbReference>
<dbReference type="GO" id="GO:0050660">
    <property type="term" value="F:flavin adenine dinucleotide binding"/>
    <property type="evidence" value="ECO:0007669"/>
    <property type="project" value="UniProtKB-UniRule"/>
</dbReference>
<dbReference type="GO" id="GO:0030488">
    <property type="term" value="P:tRNA methylation"/>
    <property type="evidence" value="ECO:0007669"/>
    <property type="project" value="TreeGrafter"/>
</dbReference>
<dbReference type="GO" id="GO:0002098">
    <property type="term" value="P:tRNA wobble uridine modification"/>
    <property type="evidence" value="ECO:0007669"/>
    <property type="project" value="InterPro"/>
</dbReference>
<dbReference type="FunFam" id="1.10.10.1800:FF:000001">
    <property type="entry name" value="tRNA uridine 5-carboxymethylaminomethyl modification enzyme MnmG"/>
    <property type="match status" value="1"/>
</dbReference>
<dbReference type="FunFam" id="1.10.150.570:FF:000001">
    <property type="entry name" value="tRNA uridine 5-carboxymethylaminomethyl modification enzyme MnmG"/>
    <property type="match status" value="1"/>
</dbReference>
<dbReference type="FunFam" id="3.50.50.60:FF:000002">
    <property type="entry name" value="tRNA uridine 5-carboxymethylaminomethyl modification enzyme MnmG"/>
    <property type="match status" value="1"/>
</dbReference>
<dbReference type="FunFam" id="3.50.50.60:FF:000010">
    <property type="entry name" value="tRNA uridine 5-carboxymethylaminomethyl modification enzyme MnmG"/>
    <property type="match status" value="1"/>
</dbReference>
<dbReference type="Gene3D" id="3.50.50.60">
    <property type="entry name" value="FAD/NAD(P)-binding domain"/>
    <property type="match status" value="2"/>
</dbReference>
<dbReference type="Gene3D" id="1.10.150.570">
    <property type="entry name" value="GidA associated domain, C-terminal subdomain"/>
    <property type="match status" value="1"/>
</dbReference>
<dbReference type="Gene3D" id="1.10.10.1800">
    <property type="entry name" value="tRNA uridine 5-carboxymethylaminomethyl modification enzyme MnmG/GidA"/>
    <property type="match status" value="1"/>
</dbReference>
<dbReference type="HAMAP" id="MF_00129">
    <property type="entry name" value="MnmG_GidA"/>
    <property type="match status" value="1"/>
</dbReference>
<dbReference type="InterPro" id="IPR036188">
    <property type="entry name" value="FAD/NAD-bd_sf"/>
</dbReference>
<dbReference type="InterPro" id="IPR049312">
    <property type="entry name" value="GIDA_C_N"/>
</dbReference>
<dbReference type="InterPro" id="IPR004416">
    <property type="entry name" value="MnmG"/>
</dbReference>
<dbReference type="InterPro" id="IPR002218">
    <property type="entry name" value="MnmG-rel"/>
</dbReference>
<dbReference type="InterPro" id="IPR020595">
    <property type="entry name" value="MnmG-rel_CS"/>
</dbReference>
<dbReference type="InterPro" id="IPR026904">
    <property type="entry name" value="MnmG_C"/>
</dbReference>
<dbReference type="InterPro" id="IPR047001">
    <property type="entry name" value="MnmG_C_subdom"/>
</dbReference>
<dbReference type="InterPro" id="IPR044920">
    <property type="entry name" value="MnmG_C_subdom_sf"/>
</dbReference>
<dbReference type="InterPro" id="IPR040131">
    <property type="entry name" value="MnmG_N"/>
</dbReference>
<dbReference type="NCBIfam" id="TIGR00136">
    <property type="entry name" value="mnmG_gidA"/>
    <property type="match status" value="1"/>
</dbReference>
<dbReference type="PANTHER" id="PTHR11806">
    <property type="entry name" value="GLUCOSE INHIBITED DIVISION PROTEIN A"/>
    <property type="match status" value="1"/>
</dbReference>
<dbReference type="PANTHER" id="PTHR11806:SF0">
    <property type="entry name" value="PROTEIN MTO1 HOMOLOG, MITOCHONDRIAL"/>
    <property type="match status" value="1"/>
</dbReference>
<dbReference type="Pfam" id="PF01134">
    <property type="entry name" value="GIDA"/>
    <property type="match status" value="1"/>
</dbReference>
<dbReference type="Pfam" id="PF21680">
    <property type="entry name" value="GIDA_C_1st"/>
    <property type="match status" value="1"/>
</dbReference>
<dbReference type="Pfam" id="PF13932">
    <property type="entry name" value="SAM_GIDA_C"/>
    <property type="match status" value="1"/>
</dbReference>
<dbReference type="SMART" id="SM01228">
    <property type="entry name" value="GIDA_assoc_3"/>
    <property type="match status" value="1"/>
</dbReference>
<dbReference type="SUPFAM" id="SSF51905">
    <property type="entry name" value="FAD/NAD(P)-binding domain"/>
    <property type="match status" value="1"/>
</dbReference>
<dbReference type="PROSITE" id="PS01280">
    <property type="entry name" value="GIDA_1"/>
    <property type="match status" value="1"/>
</dbReference>
<dbReference type="PROSITE" id="PS01281">
    <property type="entry name" value="GIDA_2"/>
    <property type="match status" value="1"/>
</dbReference>
<organism>
    <name type="scientific">Bordetella avium (strain 197N)</name>
    <dbReference type="NCBI Taxonomy" id="360910"/>
    <lineage>
        <taxon>Bacteria</taxon>
        <taxon>Pseudomonadati</taxon>
        <taxon>Pseudomonadota</taxon>
        <taxon>Betaproteobacteria</taxon>
        <taxon>Burkholderiales</taxon>
        <taxon>Alcaligenaceae</taxon>
        <taxon>Bordetella</taxon>
    </lineage>
</organism>
<protein>
    <recommendedName>
        <fullName evidence="1">tRNA uridine 5-carboxymethylaminomethyl modification enzyme MnmG</fullName>
    </recommendedName>
    <alternativeName>
        <fullName evidence="1">Glucose-inhibited division protein A</fullName>
    </alternativeName>
</protein>
<gene>
    <name evidence="1" type="primary">mnmG</name>
    <name evidence="1" type="synonym">gidA</name>
    <name type="ordered locus">BAV0001</name>
</gene>
<sequence>MNYPHEFDVIVVGGGHAGTEAALAAARSGAKTLLLTHNIETLGQMSCNPSIGGIGKGHLVKEVDALGGAMAIATDEAGIQFRILNSSKGPAVRATRAQADRVLYRKAIRHRLENQENLWLFQQSVEDLIVEGDKVVGAVTQIGLKFRGRAVVLTAGTFLNGLIHVGLQHYSGGRAGDPPANSLGQRLKELKLPQGRLKTGTPPRIDGRTINYSVLEEQPGDLDPIPVFSFMGSAALHPRQLPCWITHTNERTHDIIRGGLDRSPMYSGVIEGIGPRYCPSIEDKIHRFADKPSHQIFLEPEGLDTHEVYPNGVSTSLPFDVQYELIHSLPGLEHAHILRPGYAIEYDYFDPRGLKSSLETKAISGLFFAGQINGTTGYEEAAAQGLLAGINAARYASDREAWVPRRDEAYLGVLVDDLVTRGVTEPYRMFTSRAEYRLSLREDNADLRLTEIGRELGLVDDIRWDVFNRKRDAIQAEVQRLQSTWVNPRLLPEEPAQALLGKAIEREYALADLLKRPNISYEALMQARNGAGELLAGPGLLGDDVLAEQVEIQIKYAGYIERQRDEVQKHVVHEQQAIPADIDYDAVSSLSFEVRQKLKTHRPETVGQAARISGVTPAAVSLLLIHLKRLHYGKRAI</sequence>
<accession>Q2L2T3</accession>
<evidence type="ECO:0000255" key="1">
    <source>
        <dbReference type="HAMAP-Rule" id="MF_00129"/>
    </source>
</evidence>
<reference key="1">
    <citation type="journal article" date="2006" name="J. Bacteriol.">
        <title>Comparison of the genome sequence of the poultry pathogen Bordetella avium with those of B. bronchiseptica, B. pertussis, and B. parapertussis reveals extensive diversity in surface structures associated with host interaction.</title>
        <authorList>
            <person name="Sebaihia M."/>
            <person name="Preston A."/>
            <person name="Maskell D.J."/>
            <person name="Kuzmiak H."/>
            <person name="Connell T.D."/>
            <person name="King N.D."/>
            <person name="Orndorff P.E."/>
            <person name="Miyamoto D.M."/>
            <person name="Thomson N.R."/>
            <person name="Harris D."/>
            <person name="Goble A."/>
            <person name="Lord A."/>
            <person name="Murphy L."/>
            <person name="Quail M.A."/>
            <person name="Rutter S."/>
            <person name="Squares R."/>
            <person name="Squares S."/>
            <person name="Woodward J."/>
            <person name="Parkhill J."/>
            <person name="Temple L.M."/>
        </authorList>
    </citation>
    <scope>NUCLEOTIDE SEQUENCE [LARGE SCALE GENOMIC DNA]</scope>
    <source>
        <strain>197N</strain>
    </source>
</reference>
<feature type="chain" id="PRO_1000016554" description="tRNA uridine 5-carboxymethylaminomethyl modification enzyme MnmG">
    <location>
        <begin position="1"/>
        <end position="637"/>
    </location>
</feature>
<feature type="binding site" evidence="1">
    <location>
        <begin position="13"/>
        <end position="18"/>
    </location>
    <ligand>
        <name>FAD</name>
        <dbReference type="ChEBI" id="CHEBI:57692"/>
    </ligand>
</feature>
<feature type="binding site" evidence="1">
    <location>
        <begin position="274"/>
        <end position="288"/>
    </location>
    <ligand>
        <name>NAD(+)</name>
        <dbReference type="ChEBI" id="CHEBI:57540"/>
    </ligand>
</feature>
<comment type="function">
    <text evidence="1">NAD-binding protein involved in the addition of a carboxymethylaminomethyl (cmnm) group at the wobble position (U34) of certain tRNAs, forming tRNA-cmnm(5)s(2)U34.</text>
</comment>
<comment type="cofactor">
    <cofactor evidence="1">
        <name>FAD</name>
        <dbReference type="ChEBI" id="CHEBI:57692"/>
    </cofactor>
</comment>
<comment type="subunit">
    <text evidence="1">Homodimer. Heterotetramer of two MnmE and two MnmG subunits.</text>
</comment>
<comment type="subcellular location">
    <subcellularLocation>
        <location evidence="1">Cytoplasm</location>
    </subcellularLocation>
</comment>
<comment type="similarity">
    <text evidence="1">Belongs to the MnmG family.</text>
</comment>